<feature type="transit peptide" description="Mitochondrion" evidence="1">
    <location>
        <begin position="1"/>
        <end position="23"/>
    </location>
</feature>
<feature type="chain" id="PRO_0000006156" description="Putative cytochrome c oxidase subunit 7A3, mitochondrial">
    <location>
        <begin position="24"/>
        <end position="106"/>
    </location>
</feature>
<dbReference type="EMBL" id="AC004544">
    <property type="protein sequence ID" value="AAC12952.1"/>
    <property type="molecule type" value="Genomic_DNA"/>
</dbReference>
<dbReference type="SMR" id="O60397"/>
<dbReference type="FunCoup" id="O60397">
    <property type="interactions" value="133"/>
</dbReference>
<dbReference type="BioMuta" id="HGNC:2290"/>
<dbReference type="MassIVE" id="O60397"/>
<dbReference type="PeptideAtlas" id="O60397"/>
<dbReference type="TopDownProteomics" id="O60397"/>
<dbReference type="AGR" id="HGNC:2290"/>
<dbReference type="GeneCards" id="COX7A2P2"/>
<dbReference type="HGNC" id="HGNC:2290">
    <property type="gene designation" value="COX7A2P2"/>
</dbReference>
<dbReference type="MIM" id="123997">
    <property type="type" value="gene"/>
</dbReference>
<dbReference type="neXtProt" id="NX_O60397"/>
<dbReference type="InParanoid" id="O60397"/>
<dbReference type="PAN-GO" id="O60397">
    <property type="GO annotations" value="3 GO annotations based on evolutionary models"/>
</dbReference>
<dbReference type="PhylomeDB" id="O60397"/>
<dbReference type="PathwayCommons" id="O60397"/>
<dbReference type="Pharos" id="O60397">
    <property type="development level" value="Tdark"/>
</dbReference>
<dbReference type="Proteomes" id="UP000005640">
    <property type="component" value="Unplaced"/>
</dbReference>
<dbReference type="RNAct" id="O60397">
    <property type="molecule type" value="protein"/>
</dbReference>
<dbReference type="GO" id="GO:0005743">
    <property type="term" value="C:mitochondrial inner membrane"/>
    <property type="evidence" value="ECO:0007669"/>
    <property type="project" value="UniProtKB-SubCell"/>
</dbReference>
<dbReference type="GO" id="GO:0098803">
    <property type="term" value="C:respiratory chain complex"/>
    <property type="evidence" value="ECO:0000318"/>
    <property type="project" value="GO_Central"/>
</dbReference>
<dbReference type="GO" id="GO:0045277">
    <property type="term" value="C:respiratory chain complex IV"/>
    <property type="evidence" value="ECO:0007669"/>
    <property type="project" value="InterPro"/>
</dbReference>
<dbReference type="GO" id="GO:0006123">
    <property type="term" value="P:mitochondrial electron transport, cytochrome c to oxygen"/>
    <property type="evidence" value="ECO:0007669"/>
    <property type="project" value="InterPro"/>
</dbReference>
<dbReference type="GO" id="GO:0097250">
    <property type="term" value="P:mitochondrial respirasome assembly"/>
    <property type="evidence" value="ECO:0000318"/>
    <property type="project" value="GO_Central"/>
</dbReference>
<dbReference type="CDD" id="cd00928">
    <property type="entry name" value="Cyt_c_Oxidase_VIIa"/>
    <property type="match status" value="1"/>
</dbReference>
<dbReference type="FunFam" id="4.10.91.10:FF:000001">
    <property type="entry name" value="Cytochrome c oxidase subunit 7A1, mitochondrial"/>
    <property type="match status" value="1"/>
</dbReference>
<dbReference type="Gene3D" id="4.10.91.10">
    <property type="entry name" value="Cytochrome c oxidase, subunit VIIa"/>
    <property type="match status" value="1"/>
</dbReference>
<dbReference type="InterPro" id="IPR039297">
    <property type="entry name" value="COX7a"/>
</dbReference>
<dbReference type="InterPro" id="IPR036539">
    <property type="entry name" value="Cyt_c_oxidase_su7a_sf"/>
</dbReference>
<dbReference type="InterPro" id="IPR003177">
    <property type="entry name" value="Cytc_oxidase_su7a_met"/>
</dbReference>
<dbReference type="PANTHER" id="PTHR10510">
    <property type="entry name" value="CYTOCHROME C OXIDASE POLYPEPTIDE 7A"/>
    <property type="match status" value="1"/>
</dbReference>
<dbReference type="PANTHER" id="PTHR10510:SF14">
    <property type="entry name" value="CYTOCHROME C OXIDASE SUBUNIT 7A3, MITOCHONDRIAL-RELATED"/>
    <property type="match status" value="1"/>
</dbReference>
<dbReference type="Pfam" id="PF02238">
    <property type="entry name" value="COX7a"/>
    <property type="match status" value="1"/>
</dbReference>
<dbReference type="SUPFAM" id="SSF81419">
    <property type="entry name" value="Mitochondrial cytochrome c oxidase subunit VIIa"/>
    <property type="match status" value="1"/>
</dbReference>
<accession>O60397</accession>
<keyword id="KW-0472">Membrane</keyword>
<keyword id="KW-0496">Mitochondrion</keyword>
<keyword id="KW-0999">Mitochondrion inner membrane</keyword>
<keyword id="KW-1185">Reference proteome</keyword>
<keyword id="KW-0809">Transit peptide</keyword>
<gene>
    <name type="primary">COX7A2P2</name>
    <name type="synonym">COX7A3</name>
    <name type="synonym">COX7AL2</name>
    <name type="synonym">COX7AP2</name>
</gene>
<sequence>MLWNLLALHQIGQRTISTASHRHFKNKVPEKQKLFQEDDGIPLYLKGGIADALLHRATMILTVGGTAYAIYQLAVASFPNKGVTSIIPAITWFTFIQLSMDQKSDK</sequence>
<evidence type="ECO:0000250" key="1"/>
<evidence type="ECO:0000305" key="2"/>
<comment type="subcellular location">
    <subcellularLocation>
        <location evidence="1">Mitochondrion inner membrane</location>
    </subcellularLocation>
</comment>
<comment type="similarity">
    <text evidence="2">Belongs to the cytochrome c oxidase VIIa family.</text>
</comment>
<comment type="caution">
    <text evidence="2">Could be the product of a pseudogene.</text>
</comment>
<reference key="1">
    <citation type="journal article" date="2005" name="Nature">
        <title>Generation and annotation of the DNA sequences of human chromosomes 2 and 4.</title>
        <authorList>
            <person name="Hillier L.W."/>
            <person name="Graves T.A."/>
            <person name="Fulton R.S."/>
            <person name="Fulton L.A."/>
            <person name="Pepin K.H."/>
            <person name="Minx P."/>
            <person name="Wagner-McPherson C."/>
            <person name="Layman D."/>
            <person name="Wylie K."/>
            <person name="Sekhon M."/>
            <person name="Becker M.C."/>
            <person name="Fewell G.A."/>
            <person name="Delehaunty K.D."/>
            <person name="Miner T.L."/>
            <person name="Nash W.E."/>
            <person name="Kremitzki C."/>
            <person name="Oddy L."/>
            <person name="Du H."/>
            <person name="Sun H."/>
            <person name="Bradshaw-Cordum H."/>
            <person name="Ali J."/>
            <person name="Carter J."/>
            <person name="Cordes M."/>
            <person name="Harris A."/>
            <person name="Isak A."/>
            <person name="van Brunt A."/>
            <person name="Nguyen C."/>
            <person name="Du F."/>
            <person name="Courtney L."/>
            <person name="Kalicki J."/>
            <person name="Ozersky P."/>
            <person name="Abbott S."/>
            <person name="Armstrong J."/>
            <person name="Belter E.A."/>
            <person name="Caruso L."/>
            <person name="Cedroni M."/>
            <person name="Cotton M."/>
            <person name="Davidson T."/>
            <person name="Desai A."/>
            <person name="Elliott G."/>
            <person name="Erb T."/>
            <person name="Fronick C."/>
            <person name="Gaige T."/>
            <person name="Haakenson W."/>
            <person name="Haglund K."/>
            <person name="Holmes A."/>
            <person name="Harkins R."/>
            <person name="Kim K."/>
            <person name="Kruchowski S.S."/>
            <person name="Strong C.M."/>
            <person name="Grewal N."/>
            <person name="Goyea E."/>
            <person name="Hou S."/>
            <person name="Levy A."/>
            <person name="Martinka S."/>
            <person name="Mead K."/>
            <person name="McLellan M.D."/>
            <person name="Meyer R."/>
            <person name="Randall-Maher J."/>
            <person name="Tomlinson C."/>
            <person name="Dauphin-Kohlberg S."/>
            <person name="Kozlowicz-Reilly A."/>
            <person name="Shah N."/>
            <person name="Swearengen-Shahid S."/>
            <person name="Snider J."/>
            <person name="Strong J.T."/>
            <person name="Thompson J."/>
            <person name="Yoakum M."/>
            <person name="Leonard S."/>
            <person name="Pearman C."/>
            <person name="Trani L."/>
            <person name="Radionenko M."/>
            <person name="Waligorski J.E."/>
            <person name="Wang C."/>
            <person name="Rock S.M."/>
            <person name="Tin-Wollam A.-M."/>
            <person name="Maupin R."/>
            <person name="Latreille P."/>
            <person name="Wendl M.C."/>
            <person name="Yang S.-P."/>
            <person name="Pohl C."/>
            <person name="Wallis J.W."/>
            <person name="Spieth J."/>
            <person name="Bieri T.A."/>
            <person name="Berkowicz N."/>
            <person name="Nelson J.O."/>
            <person name="Osborne J."/>
            <person name="Ding L."/>
            <person name="Meyer R."/>
            <person name="Sabo A."/>
            <person name="Shotland Y."/>
            <person name="Sinha P."/>
            <person name="Wohldmann P.E."/>
            <person name="Cook L.L."/>
            <person name="Hickenbotham M.T."/>
            <person name="Eldred J."/>
            <person name="Williams D."/>
            <person name="Jones T.A."/>
            <person name="She X."/>
            <person name="Ciccarelli F.D."/>
            <person name="Izaurralde E."/>
            <person name="Taylor J."/>
            <person name="Schmutz J."/>
            <person name="Myers R.M."/>
            <person name="Cox D.R."/>
            <person name="Huang X."/>
            <person name="McPherson J.D."/>
            <person name="Mardis E.R."/>
            <person name="Clifton S.W."/>
            <person name="Warren W.C."/>
            <person name="Chinwalla A.T."/>
            <person name="Eddy S.R."/>
            <person name="Marra M.A."/>
            <person name="Ovcharenko I."/>
            <person name="Furey T.S."/>
            <person name="Miller W."/>
            <person name="Eichler E.E."/>
            <person name="Bork P."/>
            <person name="Suyama M."/>
            <person name="Torrents D."/>
            <person name="Waterston R.H."/>
            <person name="Wilson R.K."/>
        </authorList>
    </citation>
    <scope>NUCLEOTIDE SEQUENCE [LARGE SCALE GENOMIC DNA]</scope>
</reference>
<name>COX7S_HUMAN</name>
<proteinExistence type="uncertain"/>
<organism>
    <name type="scientific">Homo sapiens</name>
    <name type="common">Human</name>
    <dbReference type="NCBI Taxonomy" id="9606"/>
    <lineage>
        <taxon>Eukaryota</taxon>
        <taxon>Metazoa</taxon>
        <taxon>Chordata</taxon>
        <taxon>Craniata</taxon>
        <taxon>Vertebrata</taxon>
        <taxon>Euteleostomi</taxon>
        <taxon>Mammalia</taxon>
        <taxon>Eutheria</taxon>
        <taxon>Euarchontoglires</taxon>
        <taxon>Primates</taxon>
        <taxon>Haplorrhini</taxon>
        <taxon>Catarrhini</taxon>
        <taxon>Hominidae</taxon>
        <taxon>Homo</taxon>
    </lineage>
</organism>
<protein>
    <recommendedName>
        <fullName>Putative cytochrome c oxidase subunit 7A3, mitochondrial</fullName>
    </recommendedName>
    <alternativeName>
        <fullName>Cytochrome c oxidase subunit VIIa 3</fullName>
    </alternativeName>
</protein>